<organism>
    <name type="scientific">Pan troglodytes</name>
    <name type="common">Chimpanzee</name>
    <dbReference type="NCBI Taxonomy" id="9598"/>
    <lineage>
        <taxon>Eukaryota</taxon>
        <taxon>Metazoa</taxon>
        <taxon>Chordata</taxon>
        <taxon>Craniata</taxon>
        <taxon>Vertebrata</taxon>
        <taxon>Euteleostomi</taxon>
        <taxon>Mammalia</taxon>
        <taxon>Eutheria</taxon>
        <taxon>Euarchontoglires</taxon>
        <taxon>Primates</taxon>
        <taxon>Haplorrhini</taxon>
        <taxon>Catarrhini</taxon>
        <taxon>Hominidae</taxon>
        <taxon>Pan</taxon>
    </lineage>
</organism>
<accession>Q8MIB6</accession>
<dbReference type="EMBL" id="AJ507127">
    <property type="protein sequence ID" value="CAD45362.1"/>
    <property type="molecule type" value="Genomic_DNA"/>
</dbReference>
<dbReference type="SMR" id="Q8MIB6"/>
<dbReference type="GlyCosmos" id="Q8MIB6">
    <property type="glycosylation" value="11 sites, No reported glycans"/>
</dbReference>
<dbReference type="InParanoid" id="Q8MIB6"/>
<dbReference type="Proteomes" id="UP000002277">
    <property type="component" value="Unplaced"/>
</dbReference>
<dbReference type="GO" id="GO:0005886">
    <property type="term" value="C:plasma membrane"/>
    <property type="evidence" value="ECO:0007669"/>
    <property type="project" value="UniProtKB-SubCell"/>
</dbReference>
<dbReference type="CDD" id="cd09851">
    <property type="entry name" value="HTLV-1-like_HR1-HR2"/>
    <property type="match status" value="1"/>
</dbReference>
<dbReference type="Gene3D" id="1.10.287.210">
    <property type="match status" value="1"/>
</dbReference>
<dbReference type="InterPro" id="IPR018154">
    <property type="entry name" value="TLV/ENV_coat_polyprotein"/>
</dbReference>
<dbReference type="PANTHER" id="PTHR10424:SF73">
    <property type="entry name" value="ENDOGENOUS RETROVIRUS GROUP FC1 ENV POLYPROTEIN-RELATED"/>
    <property type="match status" value="1"/>
</dbReference>
<dbReference type="PANTHER" id="PTHR10424">
    <property type="entry name" value="VIRAL ENVELOPE PROTEIN"/>
    <property type="match status" value="1"/>
</dbReference>
<dbReference type="Pfam" id="PF00429">
    <property type="entry name" value="TLV_coat"/>
    <property type="match status" value="1"/>
</dbReference>
<dbReference type="SUPFAM" id="SSF58069">
    <property type="entry name" value="Virus ectodomain"/>
    <property type="match status" value="1"/>
</dbReference>
<comment type="function">
    <text>Retroviral envelope proteins mediate receptor recognition and membrane fusion during early infection. Endogenous envelope proteins may have kept, lost or modified their original function during evolution. This endogenous envelope protein has lost its original fusogenic properties.</text>
</comment>
<comment type="function">
    <text evidence="1">SU mediates receptor recognition.</text>
</comment>
<comment type="function">
    <text evidence="1">TM anchors the envelope heterodimer to the viral membrane through one transmembrane domain. The other hydrophobic domain, called fusion peptide, mediates fusion of the viral membrane with the target cell membrane (By similarity).</text>
</comment>
<comment type="subunit">
    <text evidence="1">The surface (SU) and transmembrane (TM) proteins form a heterodimer. SU and TM are attached by noncovalent interactions or by a labile interchain disulfide bond (By similarity).</text>
</comment>
<comment type="subcellular location">
    <subcellularLocation>
        <location>Virion</location>
    </subcellularLocation>
</comment>
<comment type="subcellular location">
    <molecule>Transmembrane protein</molecule>
    <subcellularLocation>
        <location evidence="3">Cell membrane</location>
        <topology evidence="3">Single-pass membrane protein</topology>
    </subcellularLocation>
</comment>
<comment type="domain">
    <text evidence="1">The CKS-17 immunosuppressive domain is present in many retroviral envelope proteins. As a synthetic peptide, it inhibits immune function in vitro and in vivo (By similarity).</text>
</comment>
<comment type="PTM">
    <text evidence="1">Specific enzymatic cleavages in vivo yield the mature SU and TM proteins.</text>
</comment>
<comment type="PTM">
    <text evidence="1">The CXXC motif is highly conserved across a broad range of retroviral envelope proteins. It is thought to participate in the formation of a labile disulfide bond possibly with the CX6CC motif present in the transmembrane protein (By similarity).</text>
</comment>
<comment type="miscellaneous">
    <text>Ortholog of the human HERV-F(c)1_Xq21.33 envelope protein.</text>
</comment>
<comment type="similarity">
    <text evidence="3">Belongs to the gamma type-C retroviral envelope protein family. HERV class-I F(c)1 env subfamily.</text>
</comment>
<comment type="caution">
    <text evidence="3">CKS-17 sequence does not match the minimal active consensus.</text>
</comment>
<feature type="signal peptide" evidence="2">
    <location>
        <begin position="1"/>
        <end position="22"/>
    </location>
</feature>
<feature type="chain" id="PRO_0000008433" description="Endogenous retrovirus group FC1 Env polyprotein">
    <location>
        <begin position="23"/>
        <end position="584"/>
    </location>
</feature>
<feature type="chain" id="PRO_0000008434" description="Surface protein" evidence="1">
    <location>
        <begin position="23"/>
        <end position="383"/>
    </location>
</feature>
<feature type="chain" id="PRO_0000008435" description="Transmembrane protein" evidence="1">
    <location>
        <begin position="384"/>
        <end position="584"/>
    </location>
</feature>
<feature type="topological domain" description="Extracellular" evidence="2">
    <location>
        <begin position="23"/>
        <end position="514"/>
    </location>
</feature>
<feature type="transmembrane region" description="Helical" evidence="2">
    <location>
        <begin position="515"/>
        <end position="540"/>
    </location>
</feature>
<feature type="topological domain" description="Cytoplasmic" evidence="2">
    <location>
        <begin position="541"/>
        <end position="584"/>
    </location>
</feature>
<feature type="region of interest" description="Fusion peptide" evidence="2">
    <location>
        <begin position="388"/>
        <end position="413"/>
    </location>
</feature>
<feature type="short sequence motif" description="CXXC" evidence="1">
    <location>
        <begin position="251"/>
        <end position="254"/>
    </location>
</feature>
<feature type="short sequence motif" description="CKS-17" evidence="1">
    <location>
        <begin position="449"/>
        <end position="465"/>
    </location>
</feature>
<feature type="short sequence motif" description="CX6CC" evidence="1">
    <location>
        <begin position="466"/>
        <end position="474"/>
    </location>
</feature>
<feature type="site" description="Cleavage" evidence="1">
    <location>
        <begin position="383"/>
        <end position="384"/>
    </location>
</feature>
<feature type="glycosylation site" description="N-linked (GlcNAc...) asparagine" evidence="2">
    <location>
        <position position="69"/>
    </location>
</feature>
<feature type="glycosylation site" description="N-linked (GlcNAc...) asparagine" evidence="2">
    <location>
        <position position="247"/>
    </location>
</feature>
<feature type="glycosylation site" description="N-linked (GlcNAc...) asparagine" evidence="2">
    <location>
        <position position="272"/>
    </location>
</feature>
<feature type="glycosylation site" description="N-linked (GlcNAc...) asparagine" evidence="2">
    <location>
        <position position="276"/>
    </location>
</feature>
<feature type="glycosylation site" description="N-linked (GlcNAc...) asparagine" evidence="2">
    <location>
        <position position="308"/>
    </location>
</feature>
<feature type="glycosylation site" description="N-linked (GlcNAc...) asparagine" evidence="2">
    <location>
        <position position="313"/>
    </location>
</feature>
<feature type="glycosylation site" description="N-linked (GlcNAc...) asparagine" evidence="2">
    <location>
        <position position="322"/>
    </location>
</feature>
<feature type="glycosylation site" description="N-linked (GlcNAc...) asparagine" evidence="2">
    <location>
        <position position="334"/>
    </location>
</feature>
<feature type="glycosylation site" description="N-linked (GlcNAc...) asparagine" evidence="2">
    <location>
        <position position="342"/>
    </location>
</feature>
<feature type="glycosylation site" description="N-linked (GlcNAc...) asparagine" evidence="2">
    <location>
        <position position="346"/>
    </location>
</feature>
<feature type="glycosylation site" description="N-linked (GlcNAc...) asparagine" evidence="2">
    <location>
        <position position="478"/>
    </location>
</feature>
<feature type="disulfide bond" evidence="1">
    <location>
        <begin position="466"/>
        <end position="473"/>
    </location>
</feature>
<reference key="1">
    <citation type="journal article" date="2003" name="Virology">
        <title>Characterization of the low-copy HERV-Fc family: evidence for recent integrations in primates of elements with coding envelope genes.</title>
        <authorList>
            <person name="Benit L."/>
            <person name="Calteau A."/>
            <person name="Heidmann T."/>
        </authorList>
    </citation>
    <scope>NUCLEOTIDE SEQUENCE [GENOMIC DNA]</scope>
</reference>
<name>EFC1_PANTR</name>
<proteinExistence type="inferred from homology"/>
<evidence type="ECO:0000250" key="1"/>
<evidence type="ECO:0000255" key="2"/>
<evidence type="ECO:0000305" key="3"/>
<gene>
    <name type="primary">ERVFC1</name>
</gene>
<sequence>MARPSPLCLLLLLTLLPPIVPSNSLLTEPPFRWRFYLHETWTQGNRLSTVTLATVDCQPHGCQAQVTFNFTSFKSVLRGWSNPTIGFVYDQTHSNCRDYWVDTNGGCPYAYCRMHVTQLDTAKKVQHTYRLTSDGRTTYFLTIPDPWDSRWVSGVTGRLYRWPTDSYPVGKLRIFLTYIRVIPQVLSNLQDQADNIKHQEEVINTLVQSHPKADMVTYDDKAEAGLFSWITLVRHGARLVNMAGLVNLSHCFLCTALSQPPLVAVPLPQAFNTSGNHTAHPSGVFSEQVPLFRDPLQPQFPFCYTTPNSSWCNQTYSGSLSNLSAPAGGYFWCNFTLTKHLNISSNNTLSRNLCLPISLVPRLTLYSEAELSSLVNPPMRQKRAVFPPLVIGVSLTSSLVASGLGTGAIVHFISSSQDLSIKLQMAIEASAESLASLQRQITSVAKVAMQNRRALDLLTADKGGTCMFLGEECCYYINESGLVETSLLTLDKIRDGLHRPSSTPNYGGGWWQSPLTTWIIPFISPILIICLLLLIAPCVLKFIKNRISEVSRVTVNQMLLHPYSRLPTSEDHYDVALTQQEAAR</sequence>
<keyword id="KW-1003">Cell membrane</keyword>
<keyword id="KW-0165">Cleavage on pair of basic residues</keyword>
<keyword id="KW-1015">Disulfide bond</keyword>
<keyword id="KW-0895">ERV</keyword>
<keyword id="KW-0325">Glycoprotein</keyword>
<keyword id="KW-0472">Membrane</keyword>
<keyword id="KW-1185">Reference proteome</keyword>
<keyword id="KW-0732">Signal</keyword>
<keyword id="KW-0812">Transmembrane</keyword>
<keyword id="KW-1133">Transmembrane helix</keyword>
<keyword id="KW-0814">Transposable element</keyword>
<keyword id="KW-0261">Viral envelope protein</keyword>
<keyword id="KW-0946">Virion</keyword>
<protein>
    <recommendedName>
        <fullName>Endogenous retrovirus group FC1 Env polyprotein</fullName>
    </recommendedName>
    <alternativeName>
        <fullName>CpzERV-Fc1env envelope protein</fullName>
    </alternativeName>
    <alternativeName>
        <fullName>ERV-F(c)1 provirus ancestral Env polyprotein</fullName>
    </alternativeName>
    <alternativeName>
        <fullName>Envelope polyprotein</fullName>
    </alternativeName>
    <component>
        <recommendedName>
            <fullName>Surface protein</fullName>
            <shortName>SU</shortName>
        </recommendedName>
    </component>
    <component>
        <recommendedName>
            <fullName>Transmembrane protein</fullName>
            <shortName>TM</shortName>
        </recommendedName>
    </component>
</protein>